<sequence length="274" mass="30226">MTLALQQTLKEAHLTPQEIDLVAVTQGPGLVGSLLVGINAANVFAYTYKKPLLGVNHLLGHIYSAQIEHEIKFPALVLLVSGGHTDLFYLTDHLQIKPLGTTIDDAVGEVYDKIAKNLNLPYPGGPLIDQLAQQGKDTYHLVRPYLKNDNLNFSFSGLKSTLVNLVMKQNLKDINIPDLCASFQTSVINVLCEKTKRALTKYHVKQLIVVGGVASNSGLRQKFMTSFSNLEVIFPSLQYCTDQAAMIGIAAYYQNQITKASKKYDLTAKPNLFF</sequence>
<name>TSAD_AYWBP</name>
<proteinExistence type="inferred from homology"/>
<evidence type="ECO:0000250" key="1"/>
<evidence type="ECO:0000305" key="2"/>
<accession>Q2NJM5</accession>
<protein>
    <recommendedName>
        <fullName>tRNA N6-adenosine threonylcarbamoyltransferase</fullName>
        <ecNumber>2.3.1.234</ecNumber>
    </recommendedName>
    <alternativeName>
        <fullName>N6-L-threonylcarbamoyladenine synthase</fullName>
        <shortName>t(6)A synthase</shortName>
    </alternativeName>
    <alternativeName>
        <fullName>t(6)A37 threonylcarbamoyladenosine biosynthesis protein TsaD</fullName>
    </alternativeName>
    <alternativeName>
        <fullName>tRNA threonylcarbamoyladenosine biosynthesis protein TsaD</fullName>
    </alternativeName>
</protein>
<gene>
    <name type="primary">tsaD</name>
    <name type="synonym">gcp</name>
    <name type="ordered locus">AYWB_251</name>
</gene>
<feature type="chain" id="PRO_0000303259" description="tRNA N6-adenosine threonylcarbamoyltransferase">
    <location>
        <begin position="1"/>
        <end position="274"/>
    </location>
</feature>
<feature type="binding site" evidence="1">
    <location>
        <position position="57"/>
    </location>
    <ligand>
        <name>Fe cation</name>
        <dbReference type="ChEBI" id="CHEBI:24875"/>
    </ligand>
</feature>
<feature type="binding site" evidence="1">
    <location>
        <position position="61"/>
    </location>
    <ligand>
        <name>Fe cation</name>
        <dbReference type="ChEBI" id="CHEBI:24875"/>
    </ligand>
</feature>
<feature type="binding site" evidence="1">
    <location>
        <begin position="79"/>
        <end position="83"/>
    </location>
    <ligand>
        <name>substrate</name>
    </ligand>
</feature>
<feature type="binding site" evidence="1">
    <location>
        <position position="112"/>
    </location>
    <ligand>
        <name>substrate</name>
    </ligand>
</feature>
<feature type="binding site" evidence="1">
    <location>
        <position position="125"/>
    </location>
    <ligand>
        <name>substrate</name>
    </ligand>
</feature>
<feature type="binding site" evidence="1">
    <location>
        <position position="129"/>
    </location>
    <ligand>
        <name>substrate</name>
    </ligand>
</feature>
<feature type="binding site" evidence="1">
    <location>
        <position position="216"/>
    </location>
    <ligand>
        <name>substrate</name>
    </ligand>
</feature>
<feature type="binding site" evidence="1">
    <location>
        <position position="242"/>
    </location>
    <ligand>
        <name>Fe cation</name>
        <dbReference type="ChEBI" id="CHEBI:24875"/>
    </ligand>
</feature>
<comment type="function">
    <text evidence="1">Required for the formation of a threonylcarbamoyl group on adenosine at position 37 (t(6)A37) in tRNAs that read codons beginning with adenine. Is involved in the transfer of the threonylcarbamoyl moiety of threonylcarbamoyl-AMP (TC-AMP) to the N6 group of A37, together with TsaE and TsaB. TsaD likely plays a direct catalytic role in this reaction (By similarity).</text>
</comment>
<comment type="catalytic activity">
    <reaction>
        <text>L-threonylcarbamoyladenylate + adenosine(37) in tRNA = N(6)-L-threonylcarbamoyladenosine(37) in tRNA + AMP + H(+)</text>
        <dbReference type="Rhea" id="RHEA:37059"/>
        <dbReference type="Rhea" id="RHEA-COMP:10162"/>
        <dbReference type="Rhea" id="RHEA-COMP:10163"/>
        <dbReference type="ChEBI" id="CHEBI:15378"/>
        <dbReference type="ChEBI" id="CHEBI:73682"/>
        <dbReference type="ChEBI" id="CHEBI:74411"/>
        <dbReference type="ChEBI" id="CHEBI:74418"/>
        <dbReference type="ChEBI" id="CHEBI:456215"/>
        <dbReference type="EC" id="2.3.1.234"/>
    </reaction>
</comment>
<comment type="cofactor">
    <cofactor evidence="1">
        <name>Fe(2+)</name>
        <dbReference type="ChEBI" id="CHEBI:29033"/>
    </cofactor>
    <text evidence="1">Binds 1 Fe(2+) ion per subunit.</text>
</comment>
<comment type="subcellular location">
    <subcellularLocation>
        <location evidence="1">Cytoplasm</location>
    </subcellularLocation>
</comment>
<comment type="similarity">
    <text evidence="2">Belongs to the KAE1 / TsaD family.</text>
</comment>
<reference key="1">
    <citation type="journal article" date="2006" name="J. Bacteriol.">
        <title>Living with genome instability: the adaptation of phytoplasmas to diverse environments of their insect and plant hosts.</title>
        <authorList>
            <person name="Bai X."/>
            <person name="Zhang J."/>
            <person name="Ewing A."/>
            <person name="Miller S.A."/>
            <person name="Jancso Radek A."/>
            <person name="Shevchenko D.V."/>
            <person name="Tsukerman K."/>
            <person name="Walunas T."/>
            <person name="Lapidus A."/>
            <person name="Campbell J.W."/>
            <person name="Hogenhout S.A."/>
        </authorList>
    </citation>
    <scope>NUCLEOTIDE SEQUENCE [LARGE SCALE GENOMIC DNA]</scope>
    <source>
        <strain>AYWB</strain>
    </source>
</reference>
<keyword id="KW-0012">Acyltransferase</keyword>
<keyword id="KW-0963">Cytoplasm</keyword>
<keyword id="KW-0408">Iron</keyword>
<keyword id="KW-0479">Metal-binding</keyword>
<keyword id="KW-0808">Transferase</keyword>
<keyword id="KW-0819">tRNA processing</keyword>
<dbReference type="EC" id="2.3.1.234"/>
<dbReference type="EMBL" id="CP000061">
    <property type="protein sequence ID" value="ABC65368.1"/>
    <property type="molecule type" value="Genomic_DNA"/>
</dbReference>
<dbReference type="SMR" id="Q2NJM5"/>
<dbReference type="STRING" id="322098.AYWB_251"/>
<dbReference type="KEGG" id="ayw:AYWB_251"/>
<dbReference type="eggNOG" id="COG0533">
    <property type="taxonomic scope" value="Bacteria"/>
</dbReference>
<dbReference type="HOGENOM" id="CLU_023208_0_1_14"/>
<dbReference type="OrthoDB" id="9806197at2"/>
<dbReference type="PhylomeDB" id="Q2NJM5"/>
<dbReference type="Proteomes" id="UP000001934">
    <property type="component" value="Chromosome"/>
</dbReference>
<dbReference type="GO" id="GO:0005737">
    <property type="term" value="C:cytoplasm"/>
    <property type="evidence" value="ECO:0007669"/>
    <property type="project" value="UniProtKB-SubCell"/>
</dbReference>
<dbReference type="GO" id="GO:0046872">
    <property type="term" value="F:metal ion binding"/>
    <property type="evidence" value="ECO:0007669"/>
    <property type="project" value="UniProtKB-KW"/>
</dbReference>
<dbReference type="GO" id="GO:0061711">
    <property type="term" value="F:N(6)-L-threonylcarbamoyladenine synthase activity"/>
    <property type="evidence" value="ECO:0007669"/>
    <property type="project" value="UniProtKB-EC"/>
</dbReference>
<dbReference type="GO" id="GO:0002949">
    <property type="term" value="P:tRNA threonylcarbamoyladenosine modification"/>
    <property type="evidence" value="ECO:0007669"/>
    <property type="project" value="InterPro"/>
</dbReference>
<dbReference type="FunFam" id="3.30.420.40:FF:000040">
    <property type="entry name" value="tRNA N6-adenosine threonylcarbamoyltransferase"/>
    <property type="match status" value="1"/>
</dbReference>
<dbReference type="Gene3D" id="3.30.420.40">
    <property type="match status" value="2"/>
</dbReference>
<dbReference type="InterPro" id="IPR043129">
    <property type="entry name" value="ATPase_NBD"/>
</dbReference>
<dbReference type="InterPro" id="IPR000905">
    <property type="entry name" value="Gcp-like_dom"/>
</dbReference>
<dbReference type="InterPro" id="IPR017861">
    <property type="entry name" value="KAE1/TsaD"/>
</dbReference>
<dbReference type="InterPro" id="IPR022450">
    <property type="entry name" value="TsaD"/>
</dbReference>
<dbReference type="NCBIfam" id="TIGR00329">
    <property type="entry name" value="gcp_kae1"/>
    <property type="match status" value="1"/>
</dbReference>
<dbReference type="NCBIfam" id="TIGR03723">
    <property type="entry name" value="T6A_TsaD_YgjD"/>
    <property type="match status" value="1"/>
</dbReference>
<dbReference type="PANTHER" id="PTHR11735">
    <property type="entry name" value="TRNA N6-ADENOSINE THREONYLCARBAMOYLTRANSFERASE"/>
    <property type="match status" value="1"/>
</dbReference>
<dbReference type="PANTHER" id="PTHR11735:SF6">
    <property type="entry name" value="TRNA N6-ADENOSINE THREONYLCARBAMOYLTRANSFERASE, MITOCHONDRIAL"/>
    <property type="match status" value="1"/>
</dbReference>
<dbReference type="Pfam" id="PF00814">
    <property type="entry name" value="TsaD"/>
    <property type="match status" value="1"/>
</dbReference>
<dbReference type="PRINTS" id="PR00789">
    <property type="entry name" value="OSIALOPTASE"/>
</dbReference>
<dbReference type="SUPFAM" id="SSF53067">
    <property type="entry name" value="Actin-like ATPase domain"/>
    <property type="match status" value="2"/>
</dbReference>
<organism>
    <name type="scientific">Aster yellows witches'-broom phytoplasma (strain AYWB)</name>
    <dbReference type="NCBI Taxonomy" id="322098"/>
    <lineage>
        <taxon>Bacteria</taxon>
        <taxon>Bacillati</taxon>
        <taxon>Mycoplasmatota</taxon>
        <taxon>Mollicutes</taxon>
        <taxon>Acholeplasmatales</taxon>
        <taxon>Acholeplasmataceae</taxon>
        <taxon>Candidatus Phytoplasma</taxon>
        <taxon>16SrI (Aster yellows group)</taxon>
    </lineage>
</organism>